<sequence>MNSPNESDGMSGREPSLGILPRTPLHSIPVAVEVKPVLPGAMPSSMGGGGGGSPSPVELRGALAGPMDPALREQQLQQELLVLKQQQQLQKQLLFAEFQKQHDHLTRQHEVQLQKHLKQQQEMLAAKRQQELEQQRQREQQRQEELEKQRLEQQLLILRNKEKSKESAIASTEVKLRLQEFLLSKSKEPTPGGLNHSLPQHPKCWGAHHASLDQSSPPQSGPPGTPPSYKLPLLGPYDSRDDFPLRKTASEPNLKVRSRLKQKVAERRSSPLLRRKDGTVISTFKKRAVEITGTGPGVSSVCNSAPGSGPSSPNSSHSTIAENGFTGSVPNIPTEMIPQHRALPLDSSPNQFSLYTSPSLPNISLGLQATVTVTNSHLTASPKLSTQQEAERQALQSLRQGGTLTGKFMSTSSIPGCLLGVALEGDTSPHGHASLLQHVCSWTGRQQSTLIAVPLHGQSPLVTGERVATSMRTVGKLPRHRPLSRTQSSPLPQSPQALQQLVMQQQHQQFLEKQKQQQMQLGKILTKTGELSRQPTTHPEETEEELTEQQEALLGEGALTIPREGSTESESTQEDLEEEEEEEEEEEEDCIQVKDEDGESGPDEGPDLEESSAGYKKLFADAQQLQPLQVYQAPLSLATVPHQALGRTQSSPAAPGSMKSPTDQPTVVKHLFTTGVVYDTFMLKHQCMCGNTHVHPEHAGRIQSIWSRLQETGLLGKCERIRGRKATLDEIQTVHSEYHTLLYGTSPLNRQKLDSKKLLGPISQKMYAMLPCGGIGVDSDTVWNEMHSSSAVRMAVGCLVELAFKVAAGELKNGFAIIRPPGHHAEESTAMGFCFFNSVAITAKLLQQKLSVGKVLIVDWDIHHGNGTQQAFYNDPSVLYISLHRYDNGNFFPGSGAPEEVGGGPGVGYNVNVAWTGGVDPPIGDVEYLTAFRTVVMPIAQEFSPDVVLVSAGFDAVEGHLSPLGGYSVTARCFGHLTRQLMTLAGGRVVLALEGGHDLTAICDASEACVSALLSVELQPLDEAVLQQKPSVNAVATLEKVIEIQSKHWSCVQRFAAGLGCSLREAQTGEKEEAETVSAMALLSVGAEQAQAVATQEHSPRPAEEPMEQEPAL</sequence>
<evidence type="ECO:0000250" key="1"/>
<evidence type="ECO:0000250" key="2">
    <source>
        <dbReference type="UniProtKB" id="Q9UQL6"/>
    </source>
</evidence>
<evidence type="ECO:0000256" key="3">
    <source>
        <dbReference type="SAM" id="MobiDB-lite"/>
    </source>
</evidence>
<evidence type="ECO:0000269" key="4">
    <source>
    </source>
</evidence>
<evidence type="ECO:0000269" key="5">
    <source>
    </source>
</evidence>
<evidence type="ECO:0000269" key="6">
    <source>
    </source>
</evidence>
<evidence type="ECO:0000269" key="7">
    <source>
    </source>
</evidence>
<evidence type="ECO:0000269" key="8">
    <source>
    </source>
</evidence>
<evidence type="ECO:0000269" key="9">
    <source>
    </source>
</evidence>
<evidence type="ECO:0000269" key="10">
    <source>
    </source>
</evidence>
<evidence type="ECO:0000269" key="11">
    <source>
    </source>
</evidence>
<evidence type="ECO:0000269" key="12">
    <source>
    </source>
</evidence>
<evidence type="ECO:0000269" key="13">
    <source>
    </source>
</evidence>
<evidence type="ECO:0000269" key="14">
    <source>
    </source>
</evidence>
<evidence type="ECO:0000305" key="15"/>
<keyword id="KW-0007">Acetylation</keyword>
<keyword id="KW-0156">Chromatin regulator</keyword>
<keyword id="KW-0963">Cytoplasm</keyword>
<keyword id="KW-0378">Hydrolase</keyword>
<keyword id="KW-1017">Isopeptide bond</keyword>
<keyword id="KW-0479">Metal-binding</keyword>
<keyword id="KW-0539">Nucleus</keyword>
<keyword id="KW-0597">Phosphoprotein</keyword>
<keyword id="KW-1185">Reference proteome</keyword>
<keyword id="KW-0678">Repressor</keyword>
<keyword id="KW-0804">Transcription</keyword>
<keyword id="KW-0805">Transcription regulation</keyword>
<keyword id="KW-0832">Ubl conjugation</keyword>
<keyword id="KW-0862">Zinc</keyword>
<gene>
    <name type="primary">Hdac5</name>
</gene>
<comment type="function">
    <text evidence="2">Responsible for the deacetylation of lysine residues on the N-terminal part of the core histones (H2A, H2B, H3 and H4). Histone deacetylation gives a tag for epigenetic repression and plays an important role in transcriptional regulation, cell cycle progression and developmental events. Histone deacetylases act via the formation of large multiprotein complexes. Involved in muscle maturation by repressing transcription of myocyte enhancer MEF2C. During muscle differentiation, it shuttles into the cytoplasm, allowing the expression of myocyte enhancer factors (By similarity). Serves as a corepressor of RARA and causes its deacetylation (By similarity). In association with RARA, plays a role in the repression of microRNA-10a and thereby in the inflammatory response (By similarity).</text>
</comment>
<comment type="catalytic activity">
    <reaction>
        <text>N(6)-acetyl-L-lysyl-[histone] + H2O = L-lysyl-[histone] + acetate</text>
        <dbReference type="Rhea" id="RHEA:58196"/>
        <dbReference type="Rhea" id="RHEA-COMP:9845"/>
        <dbReference type="Rhea" id="RHEA-COMP:11338"/>
        <dbReference type="ChEBI" id="CHEBI:15377"/>
        <dbReference type="ChEBI" id="CHEBI:29969"/>
        <dbReference type="ChEBI" id="CHEBI:30089"/>
        <dbReference type="ChEBI" id="CHEBI:61930"/>
        <dbReference type="EC" id="3.5.1.98"/>
    </reaction>
</comment>
<comment type="subunit">
    <text evidence="2 4 5 6 7 8 9 11 12 14">Interacts with AHRR, BAHD1, BCOR, HDAC7, HDAC9, CTBP1, MEF2C, NCOR2, NRIP1, PHB2 and a 14-3-3 chaperone protein. Interacts with BCL6, DDIT3/CHOP, GRK5, KDM5B and MYOCD. Interacts with EP300 in the presence of TFAP2C. Interacts with ANKRA2. Interacts with CUL7 (as part of the 3M complex); negatively regulated by ANKRA2. Interacts with ZBTB7B; the interaction allows the recruitment of HDAC4 on CD8 loci for deacetylation and possible inhibition of CD8 genes expression (PubMed:22730529). Interacts with RARA (By similarity).</text>
</comment>
<comment type="interaction">
    <interactant intactId="EBI-645339">
        <id>Q9Z2V6</id>
    </interactant>
    <interactant intactId="EBI-298630">
        <id>P23242</id>
        <label>Gja1</label>
    </interactant>
    <organismsDiffer>false</organismsDiffer>
    <experiments>2</experiments>
</comment>
<comment type="interaction">
    <interactant intactId="EBI-645339">
        <id>Q9Z2V6</id>
    </interactant>
    <interactant intactId="EBI-15658561">
        <id>Q64104</id>
        <label>Nr2e1</label>
    </interactant>
    <organismsDiffer>false</organismsDiffer>
    <experiments>3</experiments>
</comment>
<comment type="subcellular location">
    <subcellularLocation>
        <location>Nucleus</location>
    </subcellularLocation>
    <subcellularLocation>
        <location>Cytoplasm</location>
    </subcellularLocation>
    <text>Shuttles between the nucleus and the cytoplasm. In muscle cells, it shuttles into the cytoplasm during myocyte differentiation. The export to cytoplasm depends on the interaction with a 14-3-3 chaperone protein and is due to its phosphorylation at Ser-250 and Ser-488 by AMPK, CaMK1 and SIK1.</text>
</comment>
<comment type="domain">
    <text>The nuclear export sequence mediates the shuttling between the nucleus and the cytoplasm.</text>
</comment>
<comment type="PTM">
    <text evidence="1 10 12 13">Phosphorylated by AMPK, CaMK1, SIK1 and PRKD1 at Ser-250 and Ser-488. The phosphorylation is required for the export to the cytoplasm and inhibition. Phosphorylated by the PKC kinases PKN1 and PKN2, impairing nuclear import (By similarity). Phosphorylated by GRK5, leading to nuclear export of HDAC5 and allowing MEF2-mediated transcription.</text>
</comment>
<comment type="PTM">
    <text evidence="1">Ubiquitinated. Polyubiquitination however does not lead to its degradation (By similarity).</text>
</comment>
<comment type="similarity">
    <text evidence="15">Belongs to the histone deacetylase family. HD type 2 subfamily.</text>
</comment>
<dbReference type="EC" id="3.5.1.98"/>
<dbReference type="EMBL" id="AF006602">
    <property type="protein sequence ID" value="AAD09834.2"/>
    <property type="molecule type" value="mRNA"/>
</dbReference>
<dbReference type="EMBL" id="AF207748">
    <property type="protein sequence ID" value="AAF31418.1"/>
    <property type="molecule type" value="mRNA"/>
</dbReference>
<dbReference type="SMR" id="Q9Z2V6"/>
<dbReference type="CORUM" id="Q9Z2V6"/>
<dbReference type="DIP" id="DIP-40855N"/>
<dbReference type="ELM" id="Q9Z2V6"/>
<dbReference type="FunCoup" id="Q9Z2V6">
    <property type="interactions" value="1678"/>
</dbReference>
<dbReference type="IntAct" id="Q9Z2V6">
    <property type="interactions" value="92"/>
</dbReference>
<dbReference type="MINT" id="Q9Z2V6"/>
<dbReference type="STRING" id="10090.ENSMUSP00000008999"/>
<dbReference type="BindingDB" id="Q9Z2V6"/>
<dbReference type="ChEMBL" id="CHEMBL2768"/>
<dbReference type="GlyGen" id="Q9Z2V6">
    <property type="glycosylation" value="4 sites, 1 N-linked glycan (1 site), 1 O-linked glycan (1 site)"/>
</dbReference>
<dbReference type="iPTMnet" id="Q9Z2V6"/>
<dbReference type="PhosphoSitePlus" id="Q9Z2V6"/>
<dbReference type="jPOST" id="Q9Z2V6"/>
<dbReference type="PaxDb" id="10090-ENSMUSP00000102770"/>
<dbReference type="ProteomicsDB" id="269729"/>
<dbReference type="Pumba" id="Q9Z2V6"/>
<dbReference type="AGR" id="MGI:1333784"/>
<dbReference type="MGI" id="MGI:1333784">
    <property type="gene designation" value="Hdac5"/>
</dbReference>
<dbReference type="eggNOG" id="KOG1343">
    <property type="taxonomic scope" value="Eukaryota"/>
</dbReference>
<dbReference type="InParanoid" id="Q9Z2V6"/>
<dbReference type="Reactome" id="R-MMU-350054">
    <property type="pathway name" value="Notch-HLH transcription pathway"/>
</dbReference>
<dbReference type="ChiTaRS" id="Hdac5">
    <property type="organism name" value="mouse"/>
</dbReference>
<dbReference type="PRO" id="PR:Q9Z2V6"/>
<dbReference type="Proteomes" id="UP000000589">
    <property type="component" value="Unplaced"/>
</dbReference>
<dbReference type="RNAct" id="Q9Z2V6">
    <property type="molecule type" value="protein"/>
</dbReference>
<dbReference type="GO" id="GO:0044295">
    <property type="term" value="C:axonal growth cone"/>
    <property type="evidence" value="ECO:0000314"/>
    <property type="project" value="CACAO"/>
</dbReference>
<dbReference type="GO" id="GO:0000785">
    <property type="term" value="C:chromatin"/>
    <property type="evidence" value="ECO:0000314"/>
    <property type="project" value="BHF-UCL"/>
</dbReference>
<dbReference type="GO" id="GO:0005737">
    <property type="term" value="C:cytoplasm"/>
    <property type="evidence" value="ECO:0000314"/>
    <property type="project" value="UniProtKB"/>
</dbReference>
<dbReference type="GO" id="GO:0005829">
    <property type="term" value="C:cytosol"/>
    <property type="evidence" value="ECO:0000314"/>
    <property type="project" value="MGI"/>
</dbReference>
<dbReference type="GO" id="GO:0000118">
    <property type="term" value="C:histone deacetylase complex"/>
    <property type="evidence" value="ECO:0000304"/>
    <property type="project" value="UniProtKB"/>
</dbReference>
<dbReference type="GO" id="GO:0016604">
    <property type="term" value="C:nuclear body"/>
    <property type="evidence" value="ECO:0000314"/>
    <property type="project" value="MGI"/>
</dbReference>
<dbReference type="GO" id="GO:0005634">
    <property type="term" value="C:nucleus"/>
    <property type="evidence" value="ECO:0000314"/>
    <property type="project" value="UniProtKB"/>
</dbReference>
<dbReference type="GO" id="GO:0090571">
    <property type="term" value="C:RNA polymerase II transcription repressor complex"/>
    <property type="evidence" value="ECO:0000314"/>
    <property type="project" value="BHF-UCL"/>
</dbReference>
<dbReference type="GO" id="GO:0140297">
    <property type="term" value="F:DNA-binding transcription factor binding"/>
    <property type="evidence" value="ECO:0000353"/>
    <property type="project" value="UniProtKB"/>
</dbReference>
<dbReference type="GO" id="GO:0001227">
    <property type="term" value="F:DNA-binding transcription repressor activity, RNA polymerase II-specific"/>
    <property type="evidence" value="ECO:0000315"/>
    <property type="project" value="UniProtKB"/>
</dbReference>
<dbReference type="GO" id="GO:0004407">
    <property type="term" value="F:histone deacetylase activity"/>
    <property type="evidence" value="ECO:0000314"/>
    <property type="project" value="UniProtKB"/>
</dbReference>
<dbReference type="GO" id="GO:0141221">
    <property type="term" value="F:histone deacetylase activity, hydrolytic mechanism"/>
    <property type="evidence" value="ECO:0007669"/>
    <property type="project" value="UniProtKB-EC"/>
</dbReference>
<dbReference type="GO" id="GO:0046872">
    <property type="term" value="F:metal ion binding"/>
    <property type="evidence" value="ECO:0007669"/>
    <property type="project" value="UniProtKB-KW"/>
</dbReference>
<dbReference type="GO" id="GO:0019901">
    <property type="term" value="F:protein kinase binding"/>
    <property type="evidence" value="ECO:0000353"/>
    <property type="project" value="UniProtKB"/>
</dbReference>
<dbReference type="GO" id="GO:0000978">
    <property type="term" value="F:RNA polymerase II cis-regulatory region sequence-specific DNA binding"/>
    <property type="evidence" value="ECO:0000314"/>
    <property type="project" value="UniProtKB"/>
</dbReference>
<dbReference type="GO" id="GO:0061629">
    <property type="term" value="F:RNA polymerase II-specific DNA-binding transcription factor binding"/>
    <property type="evidence" value="ECO:0000353"/>
    <property type="project" value="BHF-UCL"/>
</dbReference>
<dbReference type="GO" id="GO:0003714">
    <property type="term" value="F:transcription corepressor activity"/>
    <property type="evidence" value="ECO:0000314"/>
    <property type="project" value="MGI"/>
</dbReference>
<dbReference type="GO" id="GO:0001222">
    <property type="term" value="F:transcription corepressor binding"/>
    <property type="evidence" value="ECO:0000353"/>
    <property type="project" value="BHF-UCL"/>
</dbReference>
<dbReference type="GO" id="GO:0042113">
    <property type="term" value="P:B cell activation"/>
    <property type="evidence" value="ECO:0000304"/>
    <property type="project" value="UniProtKB"/>
</dbReference>
<dbReference type="GO" id="GO:0030183">
    <property type="term" value="P:B cell differentiation"/>
    <property type="evidence" value="ECO:0000304"/>
    <property type="project" value="UniProtKB"/>
</dbReference>
<dbReference type="GO" id="GO:0071498">
    <property type="term" value="P:cellular response to fluid shear stress"/>
    <property type="evidence" value="ECO:0000314"/>
    <property type="project" value="UniProtKB"/>
</dbReference>
<dbReference type="GO" id="GO:0006325">
    <property type="term" value="P:chromatin organization"/>
    <property type="evidence" value="ECO:0000304"/>
    <property type="project" value="UniProtKB"/>
</dbReference>
<dbReference type="GO" id="GO:0007507">
    <property type="term" value="P:heart development"/>
    <property type="evidence" value="ECO:0000316"/>
    <property type="project" value="MGI"/>
</dbReference>
<dbReference type="GO" id="GO:0006954">
    <property type="term" value="P:inflammatory response"/>
    <property type="evidence" value="ECO:0000304"/>
    <property type="project" value="UniProtKB"/>
</dbReference>
<dbReference type="GO" id="GO:0033555">
    <property type="term" value="P:multicellular organismal response to stress"/>
    <property type="evidence" value="ECO:0000315"/>
    <property type="project" value="MGI"/>
</dbReference>
<dbReference type="GO" id="GO:0045892">
    <property type="term" value="P:negative regulation of DNA-templated transcription"/>
    <property type="evidence" value="ECO:0000314"/>
    <property type="project" value="MGI"/>
</dbReference>
<dbReference type="GO" id="GO:0010629">
    <property type="term" value="P:negative regulation of gene expression"/>
    <property type="evidence" value="ECO:0000315"/>
    <property type="project" value="MGI"/>
</dbReference>
<dbReference type="GO" id="GO:0045668">
    <property type="term" value="P:negative regulation of osteoblast differentiation"/>
    <property type="evidence" value="ECO:0000315"/>
    <property type="project" value="MGI"/>
</dbReference>
<dbReference type="GO" id="GO:0045843">
    <property type="term" value="P:negative regulation of striated muscle tissue development"/>
    <property type="evidence" value="ECO:0000304"/>
    <property type="project" value="UniProtKB"/>
</dbReference>
<dbReference type="GO" id="GO:0000122">
    <property type="term" value="P:negative regulation of transcription by RNA polymerase II"/>
    <property type="evidence" value="ECO:0000314"/>
    <property type="project" value="MGI"/>
</dbReference>
<dbReference type="GO" id="GO:0007399">
    <property type="term" value="P:nervous system development"/>
    <property type="evidence" value="ECO:0000304"/>
    <property type="project" value="UniProtKB"/>
</dbReference>
<dbReference type="GO" id="GO:0002076">
    <property type="term" value="P:osteoblast development"/>
    <property type="evidence" value="ECO:0000315"/>
    <property type="project" value="MGI"/>
</dbReference>
<dbReference type="GO" id="GO:0001649">
    <property type="term" value="P:osteoblast differentiation"/>
    <property type="evidence" value="ECO:0000315"/>
    <property type="project" value="MGI"/>
</dbReference>
<dbReference type="GO" id="GO:2000179">
    <property type="term" value="P:positive regulation of neural precursor cell proliferation"/>
    <property type="evidence" value="ECO:0000315"/>
    <property type="project" value="BHF-UCL"/>
</dbReference>
<dbReference type="GO" id="GO:2000648">
    <property type="term" value="P:positive regulation of stem cell proliferation"/>
    <property type="evidence" value="ECO:0000315"/>
    <property type="project" value="BHF-UCL"/>
</dbReference>
<dbReference type="GO" id="GO:0010830">
    <property type="term" value="P:regulation of myotube differentiation"/>
    <property type="evidence" value="ECO:0000314"/>
    <property type="project" value="UniProtKB"/>
</dbReference>
<dbReference type="GO" id="GO:0048742">
    <property type="term" value="P:regulation of skeletal muscle fiber development"/>
    <property type="evidence" value="ECO:0000316"/>
    <property type="project" value="MGI"/>
</dbReference>
<dbReference type="GO" id="GO:1902809">
    <property type="term" value="P:regulation of skeletal muscle fiber differentiation"/>
    <property type="evidence" value="ECO:0000316"/>
    <property type="project" value="MGI"/>
</dbReference>
<dbReference type="GO" id="GO:0061333">
    <property type="term" value="P:renal tubule morphogenesis"/>
    <property type="evidence" value="ECO:0000315"/>
    <property type="project" value="UniProtKB"/>
</dbReference>
<dbReference type="GO" id="GO:0042220">
    <property type="term" value="P:response to cocaine"/>
    <property type="evidence" value="ECO:0000314"/>
    <property type="project" value="MGI"/>
</dbReference>
<dbReference type="CDD" id="cd10007">
    <property type="entry name" value="HDAC5"/>
    <property type="match status" value="1"/>
</dbReference>
<dbReference type="FunFam" id="3.40.800.20:FF:000002">
    <property type="entry name" value="Histone deacetylase"/>
    <property type="match status" value="1"/>
</dbReference>
<dbReference type="Gene3D" id="6.10.250.1550">
    <property type="match status" value="1"/>
</dbReference>
<dbReference type="Gene3D" id="3.40.800.20">
    <property type="entry name" value="Histone deacetylase domain"/>
    <property type="match status" value="1"/>
</dbReference>
<dbReference type="InterPro" id="IPR046949">
    <property type="entry name" value="HDAC4/5/7/9"/>
</dbReference>
<dbReference type="InterPro" id="IPR000286">
    <property type="entry name" value="His_deacetylse"/>
</dbReference>
<dbReference type="InterPro" id="IPR023801">
    <property type="entry name" value="His_deacetylse_dom"/>
</dbReference>
<dbReference type="InterPro" id="IPR037138">
    <property type="entry name" value="His_deacetylse_dom_sf"/>
</dbReference>
<dbReference type="InterPro" id="IPR024643">
    <property type="entry name" value="Hist_deacetylase_Gln_rich_N"/>
</dbReference>
<dbReference type="InterPro" id="IPR023696">
    <property type="entry name" value="Ureohydrolase_dom_sf"/>
</dbReference>
<dbReference type="PANTHER" id="PTHR45364:SF12">
    <property type="entry name" value="HISTONE DEACETYLASE"/>
    <property type="match status" value="1"/>
</dbReference>
<dbReference type="PANTHER" id="PTHR45364">
    <property type="entry name" value="HISTONE DEACETYLASE 9-RELATED"/>
    <property type="match status" value="1"/>
</dbReference>
<dbReference type="Pfam" id="PF12203">
    <property type="entry name" value="HDAC4_Gln"/>
    <property type="match status" value="1"/>
</dbReference>
<dbReference type="Pfam" id="PF00850">
    <property type="entry name" value="Hist_deacetyl"/>
    <property type="match status" value="1"/>
</dbReference>
<dbReference type="PIRSF" id="PIRSF037911">
    <property type="entry name" value="HDAC_II_euk"/>
    <property type="match status" value="1"/>
</dbReference>
<dbReference type="PRINTS" id="PR01270">
    <property type="entry name" value="HDASUPER"/>
</dbReference>
<dbReference type="SUPFAM" id="SSF52768">
    <property type="entry name" value="Arginase/deacetylase"/>
    <property type="match status" value="1"/>
</dbReference>
<proteinExistence type="evidence at protein level"/>
<reference key="1">
    <citation type="journal article" date="1999" name="J. Biol. Chem.">
        <title>Identification of a new family of higher eukaryotic histone deacetylases. Coordinate expression of differentiation-dependent chromatin modifiers.</title>
        <authorList>
            <person name="Verdel A."/>
            <person name="Khochbin S."/>
        </authorList>
    </citation>
    <scope>NUCLEOTIDE SEQUENCE [MRNA]</scope>
    <source>
        <strain>C57BL/6J</strain>
        <tissue>Fetus</tissue>
    </source>
</reference>
<reference key="2">
    <citation type="journal article" date="2000" name="Genes Dev.">
        <title>Isolation of a novel histone deacetylase reveals that class I and class II deacetylases promote SMRT-mediated repression.</title>
        <authorList>
            <person name="Kao H.-Y."/>
            <person name="Downes M."/>
            <person name="Ordentlich P."/>
            <person name="Evans R.M."/>
        </authorList>
    </citation>
    <scope>NUCLEOTIDE SEQUENCE [MRNA]</scope>
    <scope>INTERACTION WITH NCOR2</scope>
    <source>
        <strain>C57BL/6J</strain>
    </source>
</reference>
<reference key="3">
    <citation type="journal article" date="2000" name="Proc. Natl. Acad. Sci. U.S.A.">
        <title>Identification of a nuclear domain with deacetylase activity.</title>
        <authorList>
            <person name="Downes M."/>
            <person name="Ordentlich P."/>
            <person name="Kao H.-Y."/>
            <person name="Alvarez J.G.A."/>
            <person name="Evans R.M."/>
        </authorList>
    </citation>
    <scope>INTERACTION WITH HDAC7</scope>
    <scope>NUCLEAR EXPORT</scope>
    <scope>MUTAGENESIS OF HIS-824 AND HIS-884</scope>
</reference>
<reference key="4">
    <citation type="journal article" date="2001" name="J. Biol. Chem.">
        <title>Association of COOH-terminal-binding protein (CtBP) and MEF2-interacting transcription repressor (MITR) contributes to transcriptional repression of the MEF2 transcription factor.</title>
        <authorList>
            <person name="Zhang C.L."/>
            <person name="McKinsey T.A."/>
            <person name="Lu J.R."/>
            <person name="Olson E.N."/>
        </authorList>
    </citation>
    <scope>INTERACTION WITH CTBP1 AND HDAC9</scope>
</reference>
<reference key="5">
    <citation type="journal article" date="2004" name="J. Biol. Chem.">
        <title>Transcriptional regulation by the repressor of estrogen receptor activity via recruitment of histone deacetylases.</title>
        <authorList>
            <person name="Kurtev V."/>
            <person name="Margueron R."/>
            <person name="Kroboth K."/>
            <person name="Ogris E."/>
            <person name="Cavailles V."/>
            <person name="Seiser C."/>
        </authorList>
    </citation>
    <scope>INTERACTION WITH PHB2</scope>
</reference>
<reference key="6">
    <citation type="journal article" date="2004" name="Nucleic Acids Res.">
        <title>Multiple domains of the receptor-interacting protein 140 contribute to transcription inhibition.</title>
        <authorList>
            <person name="Castet A."/>
            <person name="Boulahtouf A."/>
            <person name="Versini G."/>
            <person name="Bonnet S."/>
            <person name="Augereau P."/>
            <person name="Vignon F."/>
            <person name="Khochbin S."/>
            <person name="Jalaguier S."/>
            <person name="Cavailles V."/>
        </authorList>
    </citation>
    <scope>INTERACTION WITH NRIP1</scope>
</reference>
<reference key="7">
    <citation type="journal article" date="2005" name="Mol. Cell. Biol.">
        <title>Modulation of smooth muscle gene expression by association of histone acetyltransferases and deacetylases with myocardin.</title>
        <authorList>
            <person name="Cao D."/>
            <person name="Wang Z."/>
            <person name="Zhang C.L."/>
            <person name="Oh J."/>
            <person name="Xing W."/>
            <person name="Li S."/>
            <person name="Richardson J.A."/>
            <person name="Wang D.Z."/>
            <person name="Olson E.N."/>
        </authorList>
    </citation>
    <scope>INTERACTION WITH MYOCD</scope>
</reference>
<reference key="8">
    <citation type="journal article" date="2007" name="Nat. Med.">
        <title>SIK1 is a class II HDAC kinase that promotes survival of skeletal myocytes.</title>
        <authorList>
            <person name="Berdeaux R."/>
            <person name="Goebel N."/>
            <person name="Banaszynski L."/>
            <person name="Takemori H."/>
            <person name="Wandless T."/>
            <person name="Shelton G.D."/>
            <person name="Montminy M."/>
        </authorList>
    </citation>
    <scope>PHOSPHORYLATION AT SER-250 AND SER-488</scope>
    <scope>SUBCELLULAR LOCATION</scope>
    <scope>MUTAGENESIS OF SER-250 AND SER-488</scope>
</reference>
<reference key="9">
    <citation type="journal article" date="2007" name="Biochem. Biophys. Res. Commun.">
        <title>Molecular mechanism of transcriptional repression of AhR repressor involving ANKRA2, HDAC4, and HDAC5.</title>
        <authorList>
            <person name="Oshima M."/>
            <person name="Mimura J."/>
            <person name="Yamamoto M."/>
            <person name="Fujii-Kuriyama Y."/>
        </authorList>
    </citation>
    <scope>INTERACTION WITH AHRR</scope>
</reference>
<reference key="10">
    <citation type="journal article" date="2008" name="Proc. Natl. Acad. Sci. U.S.A.">
        <title>Uncovering G protein-coupled receptor kinase-5 as a histone deacetylase kinase in the nucleus of cardiomyocytes.</title>
        <authorList>
            <person name="Martini J.S."/>
            <person name="Raake P."/>
            <person name="Vinge L.E."/>
            <person name="DeGeorge B.R. Jr."/>
            <person name="Chuprun J.K."/>
            <person name="Harris D.M."/>
            <person name="Gao E."/>
            <person name="Eckhart A.D."/>
            <person name="Pitcher J.A."/>
            <person name="Koch W.J."/>
        </authorList>
    </citation>
    <scope>INTERACTION WITH GRK5</scope>
    <scope>PHOSPHORYLATION</scope>
</reference>
<reference key="11">
    <citation type="journal article" date="2010" name="Cell">
        <title>A tissue-specific atlas of mouse protein phosphorylation and expression.</title>
        <authorList>
            <person name="Huttlin E.L."/>
            <person name="Jedrychowski M.P."/>
            <person name="Elias J.E."/>
            <person name="Goswami T."/>
            <person name="Rad R."/>
            <person name="Beausoleil S.A."/>
            <person name="Villen J."/>
            <person name="Haas W."/>
            <person name="Sowa M.E."/>
            <person name="Gygi S.P."/>
        </authorList>
    </citation>
    <scope>IDENTIFICATION BY MASS SPECTROMETRY [LARGE SCALE ANALYSIS]</scope>
    <source>
        <tissue>Brain</tissue>
        <tissue>Heart</tissue>
        <tissue>Lung</tissue>
    </source>
</reference>
<reference key="12">
    <citation type="journal article" date="2011" name="J. Biol. Chem.">
        <title>AMP-activated protein kinase regulates beta-catenin transcription via histone deacetylase 5.</title>
        <authorList>
            <person name="Zhao J.X."/>
            <person name="Yue W.F."/>
            <person name="Zhu M.J."/>
            <person name="Du M."/>
        </authorList>
    </citation>
    <scope>PHOSPHORYLATION AT SER-250 AND SER-488</scope>
    <scope>SUBCELLULAR LOCATION</scope>
    <scope>MUTAGENESIS OF SER-250 AND SER-488</scope>
</reference>
<reference key="13">
    <citation type="journal article" date="2012" name="J. Immunol.">
        <title>Epigenetic silencing of CD8 genes by ThPOK-mediated deacetylation during CD4 T cell differentiation.</title>
        <authorList>
            <person name="Rui J."/>
            <person name="Liu H."/>
            <person name="Zhu X."/>
            <person name="Cui Y."/>
            <person name="Liu X."/>
        </authorList>
    </citation>
    <scope>INTERACTION WITH ZBTB7B</scope>
</reference>
<accession>Q9Z2V6</accession>
<accession>Q9JL73</accession>
<name>HDAC5_MOUSE</name>
<protein>
    <recommendedName>
        <fullName>Histone deacetylase 5</fullName>
        <shortName>HD5</shortName>
        <ecNumber>3.5.1.98</ecNumber>
    </recommendedName>
    <alternativeName>
        <fullName>Histone deacetylase mHDA1</fullName>
    </alternativeName>
</protein>
<feature type="chain" id="PRO_0000114702" description="Histone deacetylase 5">
    <location>
        <begin position="1"/>
        <end position="1113"/>
    </location>
</feature>
<feature type="region of interest" description="Disordered" evidence="3">
    <location>
        <begin position="1"/>
        <end position="22"/>
    </location>
</feature>
<feature type="region of interest" description="Disordered" evidence="3">
    <location>
        <begin position="39"/>
        <end position="63"/>
    </location>
</feature>
<feature type="region of interest" description="Disordered" evidence="3">
    <location>
        <begin position="187"/>
        <end position="272"/>
    </location>
</feature>
<feature type="region of interest" description="Disordered" evidence="3">
    <location>
        <begin position="472"/>
        <end position="494"/>
    </location>
</feature>
<feature type="region of interest" description="Disordered" evidence="3">
    <location>
        <begin position="526"/>
        <end position="611"/>
    </location>
</feature>
<feature type="region of interest" description="Histone deacetylase">
    <location>
        <begin position="675"/>
        <end position="1019"/>
    </location>
</feature>
<feature type="region of interest" description="Disordered" evidence="3">
    <location>
        <begin position="1088"/>
        <end position="1113"/>
    </location>
</feature>
<feature type="short sequence motif" description="Nuclear export signal" evidence="1">
    <location>
        <begin position="1072"/>
        <end position="1113"/>
    </location>
</feature>
<feature type="compositionally biased region" description="Basic and acidic residues" evidence="3">
    <location>
        <begin position="238"/>
        <end position="249"/>
    </location>
</feature>
<feature type="compositionally biased region" description="Basic and acidic residues" evidence="3">
    <location>
        <begin position="263"/>
        <end position="272"/>
    </location>
</feature>
<feature type="compositionally biased region" description="Low complexity" evidence="3">
    <location>
        <begin position="484"/>
        <end position="494"/>
    </location>
</feature>
<feature type="compositionally biased region" description="Acidic residues" evidence="3">
    <location>
        <begin position="571"/>
        <end position="610"/>
    </location>
</feature>
<feature type="active site" evidence="1">
    <location>
        <position position="824"/>
    </location>
</feature>
<feature type="binding site" evidence="1">
    <location>
        <position position="687"/>
    </location>
    <ligand>
        <name>Zn(2+)</name>
        <dbReference type="ChEBI" id="CHEBI:29105"/>
    </ligand>
</feature>
<feature type="binding site" evidence="1">
    <location>
        <position position="689"/>
    </location>
    <ligand>
        <name>Zn(2+)</name>
        <dbReference type="ChEBI" id="CHEBI:29105"/>
    </ligand>
</feature>
<feature type="binding site" evidence="1">
    <location>
        <position position="695"/>
    </location>
    <ligand>
        <name>Zn(2+)</name>
        <dbReference type="ChEBI" id="CHEBI:29105"/>
    </ligand>
</feature>
<feature type="binding site" evidence="1">
    <location>
        <position position="772"/>
    </location>
    <ligand>
        <name>Zn(2+)</name>
        <dbReference type="ChEBI" id="CHEBI:29105"/>
    </ligand>
</feature>
<feature type="modified residue" description="Phosphoserine; by AMPK, CaMK1, SIK1 and PKD/PRKD1" evidence="10 13">
    <location>
        <position position="250"/>
    </location>
</feature>
<feature type="modified residue" description="Phosphothreonine; by PKC" evidence="2">
    <location>
        <position position="283"/>
    </location>
</feature>
<feature type="modified residue" description="Phosphoserine; by AMPK, CaMK1, SIK1 and PKD/PRKD1" evidence="10 13">
    <location>
        <position position="488"/>
    </location>
</feature>
<feature type="modified residue" description="N6-acetyllysine" evidence="2">
    <location>
        <position position="523"/>
    </location>
</feature>
<feature type="modified residue" description="Phosphoserine" evidence="2">
    <location>
        <position position="600"/>
    </location>
</feature>
<feature type="modified residue" description="Phosphoserine" evidence="2">
    <location>
        <position position="650"/>
    </location>
</feature>
<feature type="modified residue" description="Phosphoserine" evidence="2">
    <location>
        <position position="1099"/>
    </location>
</feature>
<feature type="cross-link" description="Glycyl lysine isopeptide (Lys-Gly) (interchain with G-Cter in SUMO2)" evidence="2">
    <location>
        <position position="35"/>
    </location>
</feature>
<feature type="mutagenesis site" description="Abolishes phosphorylation by SIK1 and fails to promote beta-catenin expression; when associated with A-488." evidence="10 13">
    <original>S</original>
    <variation>A</variation>
    <location>
        <position position="250"/>
    </location>
</feature>
<feature type="mutagenesis site" description="Abolishes phosphorylation by SIK1 and fails to promote beta-catenin expression; when associated with A-250." evidence="10 13">
    <original>S</original>
    <variation>A</variation>
    <location>
        <position position="488"/>
    </location>
</feature>
<feature type="mutagenesis site" description="Abolishes deacetylase activity." evidence="5">
    <original>H</original>
    <variation>A</variation>
    <location>
        <position position="824"/>
    </location>
</feature>
<feature type="mutagenesis site" description="Disrupts the dot-like nuclear pattern." evidence="5">
    <original>H</original>
    <variation>F</variation>
    <location>
        <position position="884"/>
    </location>
</feature>
<feature type="sequence conflict" description="In Ref. 2; AAF31418." evidence="15" ref="2">
    <original>S</original>
    <variation>SA</variation>
    <location>
        <position position="7"/>
    </location>
</feature>
<feature type="sequence conflict" description="In Ref. 2; AAF31418." evidence="15" ref="2">
    <original>G</original>
    <variation>E</variation>
    <location>
        <position position="18"/>
    </location>
</feature>
<organism>
    <name type="scientific">Mus musculus</name>
    <name type="common">Mouse</name>
    <dbReference type="NCBI Taxonomy" id="10090"/>
    <lineage>
        <taxon>Eukaryota</taxon>
        <taxon>Metazoa</taxon>
        <taxon>Chordata</taxon>
        <taxon>Craniata</taxon>
        <taxon>Vertebrata</taxon>
        <taxon>Euteleostomi</taxon>
        <taxon>Mammalia</taxon>
        <taxon>Eutheria</taxon>
        <taxon>Euarchontoglires</taxon>
        <taxon>Glires</taxon>
        <taxon>Rodentia</taxon>
        <taxon>Myomorpha</taxon>
        <taxon>Muroidea</taxon>
        <taxon>Muridae</taxon>
        <taxon>Murinae</taxon>
        <taxon>Mus</taxon>
        <taxon>Mus</taxon>
    </lineage>
</organism>